<evidence type="ECO:0000255" key="1">
    <source>
        <dbReference type="HAMAP-Rule" id="MF_00169"/>
    </source>
</evidence>
<reference key="1">
    <citation type="journal article" date="2002" name="Proc. Natl. Acad. Sci. U.S.A.">
        <title>The Brucella suis genome reveals fundamental similarities between animal and plant pathogens and symbionts.</title>
        <authorList>
            <person name="Paulsen I.T."/>
            <person name="Seshadri R."/>
            <person name="Nelson K.E."/>
            <person name="Eisen J.A."/>
            <person name="Heidelberg J.F."/>
            <person name="Read T.D."/>
            <person name="Dodson R.J."/>
            <person name="Umayam L.A."/>
            <person name="Brinkac L.M."/>
            <person name="Beanan M.J."/>
            <person name="Daugherty S.C."/>
            <person name="DeBoy R.T."/>
            <person name="Durkin A.S."/>
            <person name="Kolonay J.F."/>
            <person name="Madupu R."/>
            <person name="Nelson W.C."/>
            <person name="Ayodeji B."/>
            <person name="Kraul M."/>
            <person name="Shetty J."/>
            <person name="Malek J.A."/>
            <person name="Van Aken S.E."/>
            <person name="Riedmuller S."/>
            <person name="Tettelin H."/>
            <person name="Gill S.R."/>
            <person name="White O."/>
            <person name="Salzberg S.L."/>
            <person name="Hoover D.L."/>
            <person name="Lindler L.E."/>
            <person name="Halling S.M."/>
            <person name="Boyle S.M."/>
            <person name="Fraser C.M."/>
        </authorList>
    </citation>
    <scope>NUCLEOTIDE SEQUENCE [LARGE SCALE GENOMIC DNA]</scope>
    <source>
        <strain>1330</strain>
    </source>
</reference>
<reference key="2">
    <citation type="journal article" date="2011" name="J. Bacteriol.">
        <title>Revised genome sequence of Brucella suis 1330.</title>
        <authorList>
            <person name="Tae H."/>
            <person name="Shallom S."/>
            <person name="Settlage R."/>
            <person name="Preston D."/>
            <person name="Adams L.G."/>
            <person name="Garner H.R."/>
        </authorList>
    </citation>
    <scope>NUCLEOTIDE SEQUENCE [LARGE SCALE GENOMIC DNA]</scope>
    <source>
        <strain>1330</strain>
    </source>
</reference>
<sequence>MTKTVFVLNGPNLNLLGKREPGIYGVATLDDIEASCKREAGQLELQIDFRQSNHEGDLVSWIQEAGEKNAYVLINPAAYSHTSVAIHDAIRSARVTVVEVHLSNIHAREAFRHHSHVSAVAKGVICGFGAEGYLLGLRALAAIAKEEENNGQSIKGA</sequence>
<protein>
    <recommendedName>
        <fullName evidence="1">3-dehydroquinate dehydratase</fullName>
        <shortName evidence="1">3-dehydroquinase</shortName>
        <ecNumber evidence="1">4.2.1.10</ecNumber>
    </recommendedName>
    <alternativeName>
        <fullName evidence="1">Type II DHQase</fullName>
    </alternativeName>
</protein>
<feature type="chain" id="PRO_0000159882" description="3-dehydroquinate dehydratase">
    <location>
        <begin position="1"/>
        <end position="157"/>
    </location>
</feature>
<feature type="active site" description="Proton acceptor" evidence="1">
    <location>
        <position position="24"/>
    </location>
</feature>
<feature type="active site" description="Proton donor" evidence="1">
    <location>
        <position position="101"/>
    </location>
</feature>
<feature type="binding site" evidence="1">
    <location>
        <position position="75"/>
    </location>
    <ligand>
        <name>substrate</name>
    </ligand>
</feature>
<feature type="binding site" evidence="1">
    <location>
        <position position="81"/>
    </location>
    <ligand>
        <name>substrate</name>
    </ligand>
</feature>
<feature type="binding site" evidence="1">
    <location>
        <position position="88"/>
    </location>
    <ligand>
        <name>substrate</name>
    </ligand>
</feature>
<feature type="binding site" evidence="1">
    <location>
        <begin position="102"/>
        <end position="103"/>
    </location>
    <ligand>
        <name>substrate</name>
    </ligand>
</feature>
<feature type="binding site" evidence="1">
    <location>
        <position position="112"/>
    </location>
    <ligand>
        <name>substrate</name>
    </ligand>
</feature>
<feature type="site" description="Transition state stabilizer" evidence="1">
    <location>
        <position position="19"/>
    </location>
</feature>
<proteinExistence type="inferred from homology"/>
<organism>
    <name type="scientific">Brucella suis biovar 1 (strain 1330)</name>
    <dbReference type="NCBI Taxonomy" id="204722"/>
    <lineage>
        <taxon>Bacteria</taxon>
        <taxon>Pseudomonadati</taxon>
        <taxon>Pseudomonadota</taxon>
        <taxon>Alphaproteobacteria</taxon>
        <taxon>Hyphomicrobiales</taxon>
        <taxon>Brucellaceae</taxon>
        <taxon>Brucella/Ochrobactrum group</taxon>
        <taxon>Brucella</taxon>
    </lineage>
</organism>
<gene>
    <name evidence="1" type="primary">aroQ</name>
    <name type="ordered locus">BR0908</name>
    <name type="ordered locus">BS1330_I0904</name>
</gene>
<comment type="function">
    <text evidence="1">Catalyzes a trans-dehydration via an enolate intermediate.</text>
</comment>
<comment type="catalytic activity">
    <reaction evidence="1">
        <text>3-dehydroquinate = 3-dehydroshikimate + H2O</text>
        <dbReference type="Rhea" id="RHEA:21096"/>
        <dbReference type="ChEBI" id="CHEBI:15377"/>
        <dbReference type="ChEBI" id="CHEBI:16630"/>
        <dbReference type="ChEBI" id="CHEBI:32364"/>
        <dbReference type="EC" id="4.2.1.10"/>
    </reaction>
</comment>
<comment type="pathway">
    <text evidence="1">Metabolic intermediate biosynthesis; chorismate biosynthesis; chorismate from D-erythrose 4-phosphate and phosphoenolpyruvate: step 3/7.</text>
</comment>
<comment type="subunit">
    <text evidence="1">Homododecamer.</text>
</comment>
<comment type="similarity">
    <text evidence="1">Belongs to the type-II 3-dehydroquinase family.</text>
</comment>
<dbReference type="EC" id="4.2.1.10" evidence="1"/>
<dbReference type="EMBL" id="AE014291">
    <property type="protein sequence ID" value="AAN29836.1"/>
    <property type="molecule type" value="Genomic_DNA"/>
</dbReference>
<dbReference type="EMBL" id="CP002997">
    <property type="protein sequence ID" value="AEM18253.1"/>
    <property type="molecule type" value="Genomic_DNA"/>
</dbReference>
<dbReference type="RefSeq" id="WP_002964037.1">
    <property type="nucleotide sequence ID" value="NZ_KN046804.1"/>
</dbReference>
<dbReference type="SMR" id="Q8G120"/>
<dbReference type="GeneID" id="97533798"/>
<dbReference type="KEGG" id="bms:BR0908"/>
<dbReference type="KEGG" id="bsi:BS1330_I0904"/>
<dbReference type="PATRIC" id="fig|204722.21.peg.2681"/>
<dbReference type="HOGENOM" id="CLU_090968_1_0_5"/>
<dbReference type="UniPathway" id="UPA00053">
    <property type="reaction ID" value="UER00086"/>
</dbReference>
<dbReference type="Proteomes" id="UP000007104">
    <property type="component" value="Chromosome I"/>
</dbReference>
<dbReference type="GO" id="GO:0003855">
    <property type="term" value="F:3-dehydroquinate dehydratase activity"/>
    <property type="evidence" value="ECO:0007669"/>
    <property type="project" value="UniProtKB-UniRule"/>
</dbReference>
<dbReference type="GO" id="GO:0008652">
    <property type="term" value="P:amino acid biosynthetic process"/>
    <property type="evidence" value="ECO:0007669"/>
    <property type="project" value="UniProtKB-KW"/>
</dbReference>
<dbReference type="GO" id="GO:0009073">
    <property type="term" value="P:aromatic amino acid family biosynthetic process"/>
    <property type="evidence" value="ECO:0007669"/>
    <property type="project" value="UniProtKB-KW"/>
</dbReference>
<dbReference type="GO" id="GO:0009423">
    <property type="term" value="P:chorismate biosynthetic process"/>
    <property type="evidence" value="ECO:0007669"/>
    <property type="project" value="UniProtKB-UniRule"/>
</dbReference>
<dbReference type="GO" id="GO:0019631">
    <property type="term" value="P:quinate catabolic process"/>
    <property type="evidence" value="ECO:0007669"/>
    <property type="project" value="TreeGrafter"/>
</dbReference>
<dbReference type="CDD" id="cd00466">
    <property type="entry name" value="DHQase_II"/>
    <property type="match status" value="1"/>
</dbReference>
<dbReference type="Gene3D" id="3.40.50.9100">
    <property type="entry name" value="Dehydroquinase, class II"/>
    <property type="match status" value="1"/>
</dbReference>
<dbReference type="HAMAP" id="MF_00169">
    <property type="entry name" value="AroQ"/>
    <property type="match status" value="1"/>
</dbReference>
<dbReference type="InterPro" id="IPR001874">
    <property type="entry name" value="DHquinase_II"/>
</dbReference>
<dbReference type="InterPro" id="IPR018509">
    <property type="entry name" value="DHquinase_II_CS"/>
</dbReference>
<dbReference type="InterPro" id="IPR036441">
    <property type="entry name" value="DHquinase_II_sf"/>
</dbReference>
<dbReference type="NCBIfam" id="TIGR01088">
    <property type="entry name" value="aroQ"/>
    <property type="match status" value="1"/>
</dbReference>
<dbReference type="NCBIfam" id="NF003805">
    <property type="entry name" value="PRK05395.1-2"/>
    <property type="match status" value="1"/>
</dbReference>
<dbReference type="NCBIfam" id="NF003806">
    <property type="entry name" value="PRK05395.1-3"/>
    <property type="match status" value="1"/>
</dbReference>
<dbReference type="NCBIfam" id="NF003807">
    <property type="entry name" value="PRK05395.1-4"/>
    <property type="match status" value="1"/>
</dbReference>
<dbReference type="PANTHER" id="PTHR21272">
    <property type="entry name" value="CATABOLIC 3-DEHYDROQUINASE"/>
    <property type="match status" value="1"/>
</dbReference>
<dbReference type="PANTHER" id="PTHR21272:SF3">
    <property type="entry name" value="CATABOLIC 3-DEHYDROQUINASE"/>
    <property type="match status" value="1"/>
</dbReference>
<dbReference type="Pfam" id="PF01220">
    <property type="entry name" value="DHquinase_II"/>
    <property type="match status" value="1"/>
</dbReference>
<dbReference type="PIRSF" id="PIRSF001399">
    <property type="entry name" value="DHquinase_II"/>
    <property type="match status" value="1"/>
</dbReference>
<dbReference type="SUPFAM" id="SSF52304">
    <property type="entry name" value="Type II 3-dehydroquinate dehydratase"/>
    <property type="match status" value="1"/>
</dbReference>
<dbReference type="PROSITE" id="PS01029">
    <property type="entry name" value="DEHYDROQUINASE_II"/>
    <property type="match status" value="1"/>
</dbReference>
<accession>Q8G120</accession>
<accession>G0K9D6</accession>
<name>AROQ_BRUSU</name>
<keyword id="KW-0028">Amino-acid biosynthesis</keyword>
<keyword id="KW-0057">Aromatic amino acid biosynthesis</keyword>
<keyword id="KW-0456">Lyase</keyword>